<evidence type="ECO:0000255" key="1">
    <source>
        <dbReference type="HAMAP-Rule" id="MF_01832"/>
    </source>
</evidence>
<organism>
    <name type="scientific">Yersinia pestis bv. Antiqua (strain Antiqua)</name>
    <dbReference type="NCBI Taxonomy" id="360102"/>
    <lineage>
        <taxon>Bacteria</taxon>
        <taxon>Pseudomonadati</taxon>
        <taxon>Pseudomonadota</taxon>
        <taxon>Gammaproteobacteria</taxon>
        <taxon>Enterobacterales</taxon>
        <taxon>Yersiniaceae</taxon>
        <taxon>Yersinia</taxon>
    </lineage>
</organism>
<accession>Q1C762</accession>
<feature type="chain" id="PRO_1000070453" description="Cysteine desulfuration protein SufE">
    <location>
        <begin position="1"/>
        <end position="140"/>
    </location>
</feature>
<feature type="active site" description="Cysteine persulfide intermediate" evidence="1">
    <location>
        <position position="51"/>
    </location>
</feature>
<reference key="1">
    <citation type="journal article" date="2006" name="J. Bacteriol.">
        <title>Complete genome sequence of Yersinia pestis strains Antiqua and Nepal516: evidence of gene reduction in an emerging pathogen.</title>
        <authorList>
            <person name="Chain P.S.G."/>
            <person name="Hu P."/>
            <person name="Malfatti S.A."/>
            <person name="Radnedge L."/>
            <person name="Larimer F."/>
            <person name="Vergez L.M."/>
            <person name="Worsham P."/>
            <person name="Chu M.C."/>
            <person name="Andersen G.L."/>
        </authorList>
    </citation>
    <scope>NUCLEOTIDE SEQUENCE [LARGE SCALE GENOMIC DNA]</scope>
    <source>
        <strain>Antiqua</strain>
    </source>
</reference>
<sequence>MAGLPDRDKLIRNFSRCLNWEEKYLYIIELGGQLAPLTEQQRHPENLISGCQSQVWIAMTLSAEGHVIFAGDSDAAIVKGLVAVVFILYHDLTPQQIISLDVRPFFADLALSQHLTPSRSQGLEAMIRAIRTKVANLSAH</sequence>
<comment type="function">
    <text evidence="1">Participates in cysteine desulfuration mediated by SufS. Cysteine desulfuration mobilizes sulfur from L-cysteine to yield L-alanine and constitutes an essential step in sulfur metabolism for biosynthesis of a variety of sulfur-containing biomolecules. Functions as a sulfur acceptor for SufS, by mediating the direct transfer of the sulfur atom from the S-sulfanylcysteine of SufS, an intermediate product of cysteine desulfuration process.</text>
</comment>
<comment type="pathway">
    <text evidence="1">Cofactor biosynthesis; iron-sulfur cluster biosynthesis.</text>
</comment>
<comment type="subunit">
    <text evidence="1">Homodimer. Interacts with SufS.</text>
</comment>
<comment type="subcellular location">
    <subcellularLocation>
        <location evidence="1">Cytoplasm</location>
    </subcellularLocation>
</comment>
<comment type="similarity">
    <text evidence="1">Belongs to the SufE family.</text>
</comment>
<gene>
    <name evidence="1" type="primary">sufE</name>
    <name type="ordered locus">YPA_1744</name>
</gene>
<proteinExistence type="inferred from homology"/>
<dbReference type="EMBL" id="CP000308">
    <property type="protein sequence ID" value="ABG13710.1"/>
    <property type="molecule type" value="Genomic_DNA"/>
</dbReference>
<dbReference type="RefSeq" id="WP_002211804.1">
    <property type="nucleotide sequence ID" value="NZ_CP009906.1"/>
</dbReference>
<dbReference type="SMR" id="Q1C762"/>
<dbReference type="GeneID" id="57976275"/>
<dbReference type="KEGG" id="ypa:YPA_1744"/>
<dbReference type="UniPathway" id="UPA00266"/>
<dbReference type="Proteomes" id="UP000001971">
    <property type="component" value="Chromosome"/>
</dbReference>
<dbReference type="GO" id="GO:0005737">
    <property type="term" value="C:cytoplasm"/>
    <property type="evidence" value="ECO:0007669"/>
    <property type="project" value="UniProtKB-SubCell"/>
</dbReference>
<dbReference type="GO" id="GO:0016226">
    <property type="term" value="P:iron-sulfur cluster assembly"/>
    <property type="evidence" value="ECO:0007669"/>
    <property type="project" value="InterPro"/>
</dbReference>
<dbReference type="GO" id="GO:0006790">
    <property type="term" value="P:sulfur compound metabolic process"/>
    <property type="evidence" value="ECO:0007669"/>
    <property type="project" value="InterPro"/>
</dbReference>
<dbReference type="Gene3D" id="3.90.1010.10">
    <property type="match status" value="1"/>
</dbReference>
<dbReference type="HAMAP" id="MF_01832">
    <property type="entry name" value="SufE"/>
    <property type="match status" value="1"/>
</dbReference>
<dbReference type="InterPro" id="IPR023939">
    <property type="entry name" value="Cysteine_desulfuration_SufE"/>
</dbReference>
<dbReference type="InterPro" id="IPR003808">
    <property type="entry name" value="Fe-S_metab-assoc_dom"/>
</dbReference>
<dbReference type="NCBIfam" id="NF006792">
    <property type="entry name" value="PRK09296.1"/>
    <property type="match status" value="1"/>
</dbReference>
<dbReference type="PANTHER" id="PTHR43597:SF3">
    <property type="entry name" value="CYSTEINE DESULFURATION PROTEIN SUFE"/>
    <property type="match status" value="1"/>
</dbReference>
<dbReference type="PANTHER" id="PTHR43597">
    <property type="entry name" value="SULFUR ACCEPTOR PROTEIN CSDE"/>
    <property type="match status" value="1"/>
</dbReference>
<dbReference type="Pfam" id="PF02657">
    <property type="entry name" value="SufE"/>
    <property type="match status" value="1"/>
</dbReference>
<dbReference type="SUPFAM" id="SSF82649">
    <property type="entry name" value="SufE/NifU"/>
    <property type="match status" value="1"/>
</dbReference>
<name>SUFE_YERPA</name>
<protein>
    <recommendedName>
        <fullName evidence="1">Cysteine desulfuration protein SufE</fullName>
    </recommendedName>
</protein>
<keyword id="KW-0963">Cytoplasm</keyword>